<keyword id="KW-1185">Reference proteome</keyword>
<keyword id="KW-0687">Ribonucleoprotein</keyword>
<keyword id="KW-0689">Ribosomal protein</keyword>
<keyword id="KW-0694">RNA-binding</keyword>
<keyword id="KW-0699">rRNA-binding</keyword>
<accession>Q3A6N7</accession>
<protein>
    <recommendedName>
        <fullName evidence="1">Large ribosomal subunit protein uL14</fullName>
    </recommendedName>
    <alternativeName>
        <fullName evidence="2">50S ribosomal protein L14</fullName>
    </alternativeName>
</protein>
<comment type="function">
    <text evidence="1">Binds to 23S rRNA. Forms part of two intersubunit bridges in the 70S ribosome.</text>
</comment>
<comment type="subunit">
    <text evidence="1">Part of the 50S ribosomal subunit. Forms a cluster with proteins L3 and L19. In the 70S ribosome, L14 and L19 interact and together make contacts with the 16S rRNA in bridges B5 and B8.</text>
</comment>
<comment type="similarity">
    <text evidence="1">Belongs to the universal ribosomal protein uL14 family.</text>
</comment>
<proteinExistence type="inferred from homology"/>
<name>RL14_SYNC1</name>
<organism>
    <name type="scientific">Syntrophotalea carbinolica (strain DSM 2380 / NBRC 103641 / GraBd1)</name>
    <name type="common">Pelobacter carbinolicus</name>
    <dbReference type="NCBI Taxonomy" id="338963"/>
    <lineage>
        <taxon>Bacteria</taxon>
        <taxon>Pseudomonadati</taxon>
        <taxon>Thermodesulfobacteriota</taxon>
        <taxon>Desulfuromonadia</taxon>
        <taxon>Desulfuromonadales</taxon>
        <taxon>Syntrophotaleaceae</taxon>
        <taxon>Syntrophotalea</taxon>
    </lineage>
</organism>
<evidence type="ECO:0000255" key="1">
    <source>
        <dbReference type="HAMAP-Rule" id="MF_01367"/>
    </source>
</evidence>
<evidence type="ECO:0000305" key="2"/>
<gene>
    <name evidence="1" type="primary">rplN</name>
    <name type="ordered locus">Pcar_0711</name>
</gene>
<dbReference type="EMBL" id="CP000142">
    <property type="protein sequence ID" value="ABA87970.1"/>
    <property type="molecule type" value="Genomic_DNA"/>
</dbReference>
<dbReference type="RefSeq" id="WP_011340413.1">
    <property type="nucleotide sequence ID" value="NC_007498.2"/>
</dbReference>
<dbReference type="SMR" id="Q3A6N7"/>
<dbReference type="STRING" id="338963.Pcar_0711"/>
<dbReference type="KEGG" id="pca:Pcar_0711"/>
<dbReference type="eggNOG" id="COG0093">
    <property type="taxonomic scope" value="Bacteria"/>
</dbReference>
<dbReference type="HOGENOM" id="CLU_095071_2_1_7"/>
<dbReference type="OrthoDB" id="9806379at2"/>
<dbReference type="Proteomes" id="UP000002534">
    <property type="component" value="Chromosome"/>
</dbReference>
<dbReference type="GO" id="GO:0022625">
    <property type="term" value="C:cytosolic large ribosomal subunit"/>
    <property type="evidence" value="ECO:0007669"/>
    <property type="project" value="TreeGrafter"/>
</dbReference>
<dbReference type="GO" id="GO:0070180">
    <property type="term" value="F:large ribosomal subunit rRNA binding"/>
    <property type="evidence" value="ECO:0007669"/>
    <property type="project" value="TreeGrafter"/>
</dbReference>
<dbReference type="GO" id="GO:0003735">
    <property type="term" value="F:structural constituent of ribosome"/>
    <property type="evidence" value="ECO:0007669"/>
    <property type="project" value="InterPro"/>
</dbReference>
<dbReference type="GO" id="GO:0006412">
    <property type="term" value="P:translation"/>
    <property type="evidence" value="ECO:0007669"/>
    <property type="project" value="UniProtKB-UniRule"/>
</dbReference>
<dbReference type="CDD" id="cd00337">
    <property type="entry name" value="Ribosomal_uL14"/>
    <property type="match status" value="1"/>
</dbReference>
<dbReference type="FunFam" id="2.40.150.20:FF:000001">
    <property type="entry name" value="50S ribosomal protein L14"/>
    <property type="match status" value="1"/>
</dbReference>
<dbReference type="Gene3D" id="2.40.150.20">
    <property type="entry name" value="Ribosomal protein L14"/>
    <property type="match status" value="1"/>
</dbReference>
<dbReference type="HAMAP" id="MF_01367">
    <property type="entry name" value="Ribosomal_uL14"/>
    <property type="match status" value="1"/>
</dbReference>
<dbReference type="InterPro" id="IPR000218">
    <property type="entry name" value="Ribosomal_uL14"/>
</dbReference>
<dbReference type="InterPro" id="IPR005745">
    <property type="entry name" value="Ribosomal_uL14_bac-type"/>
</dbReference>
<dbReference type="InterPro" id="IPR019972">
    <property type="entry name" value="Ribosomal_uL14_CS"/>
</dbReference>
<dbReference type="InterPro" id="IPR036853">
    <property type="entry name" value="Ribosomal_uL14_sf"/>
</dbReference>
<dbReference type="NCBIfam" id="TIGR01067">
    <property type="entry name" value="rplN_bact"/>
    <property type="match status" value="1"/>
</dbReference>
<dbReference type="PANTHER" id="PTHR11761">
    <property type="entry name" value="50S/60S RIBOSOMAL PROTEIN L14/L23"/>
    <property type="match status" value="1"/>
</dbReference>
<dbReference type="PANTHER" id="PTHR11761:SF3">
    <property type="entry name" value="LARGE RIBOSOMAL SUBUNIT PROTEIN UL14M"/>
    <property type="match status" value="1"/>
</dbReference>
<dbReference type="Pfam" id="PF00238">
    <property type="entry name" value="Ribosomal_L14"/>
    <property type="match status" value="1"/>
</dbReference>
<dbReference type="SMART" id="SM01374">
    <property type="entry name" value="Ribosomal_L14"/>
    <property type="match status" value="1"/>
</dbReference>
<dbReference type="SUPFAM" id="SSF50193">
    <property type="entry name" value="Ribosomal protein L14"/>
    <property type="match status" value="1"/>
</dbReference>
<dbReference type="PROSITE" id="PS00049">
    <property type="entry name" value="RIBOSOMAL_L14"/>
    <property type="match status" value="1"/>
</dbReference>
<reference key="1">
    <citation type="submission" date="2005-10" db="EMBL/GenBank/DDBJ databases">
        <title>Complete sequence of Pelobacter carbinolicus DSM 2380.</title>
        <authorList>
            <person name="Copeland A."/>
            <person name="Lucas S."/>
            <person name="Lapidus A."/>
            <person name="Barry K."/>
            <person name="Detter J.C."/>
            <person name="Glavina T."/>
            <person name="Hammon N."/>
            <person name="Israni S."/>
            <person name="Pitluck S."/>
            <person name="Chertkov O."/>
            <person name="Schmutz J."/>
            <person name="Larimer F."/>
            <person name="Land M."/>
            <person name="Kyrpides N."/>
            <person name="Ivanova N."/>
            <person name="Richardson P."/>
        </authorList>
    </citation>
    <scope>NUCLEOTIDE SEQUENCE [LARGE SCALE GENOMIC DNA]</scope>
    <source>
        <strain>DSM 2380 / NBRC 103641 / GraBd1</strain>
    </source>
</reference>
<feature type="chain" id="PRO_0000266516" description="Large ribosomal subunit protein uL14">
    <location>
        <begin position="1"/>
        <end position="122"/>
    </location>
</feature>
<sequence length="122" mass="13221">MIQMQTMLDVADNSGARKLCCIKVLGGSKRKYAGLGDIIICSVKEALPNSRVKKGDVVRAVIVRTAKEVPRPDGSAIRFDKNSAVVVNQAGEPIGTRIFGPVARELRAQRYMKIVSLAPEVL</sequence>